<keyword id="KW-0903">Direct protein sequencing</keyword>
<keyword id="KW-1015">Disulfide bond</keyword>
<keyword id="KW-0960">Knottin</keyword>
<keyword id="KW-0611">Plant defense</keyword>
<accession>P85135</accession>
<reference evidence="4" key="1">
    <citation type="journal article" date="2007" name="ChemBioChem">
        <title>The cyclotide fingerprint in Oldenlandia affinis: elucidation of chemically modified, linear and novel macrocyclic peptides.</title>
        <authorList>
            <person name="Plan M.R.R."/>
            <person name="Goeransson U."/>
            <person name="Clark R.J."/>
            <person name="Daly N.L."/>
            <person name="Colgrave M.L."/>
            <person name="Craik D.J."/>
        </authorList>
    </citation>
    <scope>PROTEIN SEQUENCE</scope>
    <scope>MASS SPECTROMETRY</scope>
</reference>
<protein>
    <recommendedName>
        <fullName>Kalata-B17</fullName>
    </recommendedName>
</protein>
<comment type="function">
    <text evidence="4">Probably participates in a plant defense mechanism.</text>
</comment>
<comment type="domain">
    <text evidence="1">The presence of a 'disulfide through disulfide knot' structurally defines this protein as a knottin.</text>
</comment>
<comment type="PTM">
    <text evidence="2 3">This is a cyclic peptide.</text>
</comment>
<comment type="mass spectrometry" mass="3185.9" method="Electrospray" evidence="3"/>
<comment type="similarity">
    <text evidence="2">Belongs to the cyclotide family. Bracelet subfamily.</text>
</comment>
<comment type="caution">
    <text evidence="3">This peptide is cyclic. The start position was chosen by similarity to OAK1 (kalata-B1) for which the DNA sequence is known.</text>
</comment>
<proteinExistence type="evidence at protein level"/>
<feature type="peptide" id="PRO_0000294964" description="Kalata-B17" evidence="2 3">
    <location>
        <begin position="1"/>
        <end position="30"/>
    </location>
</feature>
<feature type="disulfide bond" evidence="1 2">
    <location>
        <begin position="4"/>
        <end position="21"/>
    </location>
</feature>
<feature type="disulfide bond" evidence="1 2">
    <location>
        <begin position="8"/>
        <end position="23"/>
    </location>
</feature>
<feature type="disulfide bond" evidence="1 2">
    <location>
        <begin position="13"/>
        <end position="28"/>
    </location>
</feature>
<feature type="cross-link" description="Cyclopeptide (Gly-Asn)" evidence="3">
    <location>
        <begin position="1"/>
        <end position="30"/>
    </location>
</feature>
<evidence type="ECO:0000250" key="1">
    <source>
        <dbReference type="UniProtKB" id="P82230"/>
    </source>
</evidence>
<evidence type="ECO:0000255" key="2">
    <source>
        <dbReference type="PROSITE-ProRule" id="PRU00395"/>
    </source>
</evidence>
<evidence type="ECO:0000269" key="3">
    <source>
    </source>
</evidence>
<evidence type="ECO:0000305" key="4"/>
<sequence length="30" mass="3210">GIPCAESCVYIPCTITALLGCKCKDQVCYN</sequence>
<organism>
    <name type="scientific">Oldenlandia affinis</name>
    <dbReference type="NCBI Taxonomy" id="60225"/>
    <lineage>
        <taxon>Eukaryota</taxon>
        <taxon>Viridiplantae</taxon>
        <taxon>Streptophyta</taxon>
        <taxon>Embryophyta</taxon>
        <taxon>Tracheophyta</taxon>
        <taxon>Spermatophyta</taxon>
        <taxon>Magnoliopsida</taxon>
        <taxon>eudicotyledons</taxon>
        <taxon>Gunneridae</taxon>
        <taxon>Pentapetalae</taxon>
        <taxon>asterids</taxon>
        <taxon>lamiids</taxon>
        <taxon>Gentianales</taxon>
        <taxon>Rubiaceae</taxon>
        <taxon>Rubioideae</taxon>
        <taxon>Spermacoceae</taxon>
        <taxon>Hedyotis-Oldenlandia complex</taxon>
        <taxon>Oldenlandia</taxon>
    </lineage>
</organism>
<name>KAB17_OLDAF</name>
<dbReference type="SMR" id="P85135"/>
<dbReference type="GO" id="GO:0006952">
    <property type="term" value="P:defense response"/>
    <property type="evidence" value="ECO:0007669"/>
    <property type="project" value="UniProtKB-KW"/>
</dbReference>
<dbReference type="InterPro" id="IPR005535">
    <property type="entry name" value="Cyclotide"/>
</dbReference>
<dbReference type="InterPro" id="IPR012323">
    <property type="entry name" value="Cyclotide_bracelet_CS"/>
</dbReference>
<dbReference type="InterPro" id="IPR036146">
    <property type="entry name" value="Cyclotide_sf"/>
</dbReference>
<dbReference type="Pfam" id="PF03784">
    <property type="entry name" value="Cyclotide"/>
    <property type="match status" value="1"/>
</dbReference>
<dbReference type="PIRSF" id="PIRSF037891">
    <property type="entry name" value="Cycloviolacin"/>
    <property type="match status" value="1"/>
</dbReference>
<dbReference type="SUPFAM" id="SSF57038">
    <property type="entry name" value="Cyclotides"/>
    <property type="match status" value="1"/>
</dbReference>
<dbReference type="PROSITE" id="PS51052">
    <property type="entry name" value="CYCLOTIDE"/>
    <property type="match status" value="1"/>
</dbReference>
<dbReference type="PROSITE" id="PS60008">
    <property type="entry name" value="CYCLOTIDE_BRACELET"/>
    <property type="match status" value="1"/>
</dbReference>